<organism>
    <name type="scientific">Rickettsia massiliae (strain Mtu5)</name>
    <dbReference type="NCBI Taxonomy" id="416276"/>
    <lineage>
        <taxon>Bacteria</taxon>
        <taxon>Pseudomonadati</taxon>
        <taxon>Pseudomonadota</taxon>
        <taxon>Alphaproteobacteria</taxon>
        <taxon>Rickettsiales</taxon>
        <taxon>Rickettsiaceae</taxon>
        <taxon>Rickettsieae</taxon>
        <taxon>Rickettsia</taxon>
        <taxon>spotted fever group</taxon>
    </lineage>
</organism>
<gene>
    <name evidence="1" type="primary">smpB</name>
    <name type="ordered locus">RMA_0611</name>
</gene>
<name>SSRP_RICM5</name>
<comment type="function">
    <text evidence="1">Required for rescue of stalled ribosomes mediated by trans-translation. Binds to transfer-messenger RNA (tmRNA), required for stable association of tmRNA with ribosomes. tmRNA and SmpB together mimic tRNA shape, replacing the anticodon stem-loop with SmpB. tmRNA is encoded by the ssrA gene; the 2 termini fold to resemble tRNA(Ala) and it encodes a 'tag peptide', a short internal open reading frame. During trans-translation Ala-aminoacylated tmRNA acts like a tRNA, entering the A-site of stalled ribosomes, displacing the stalled mRNA. The ribosome then switches to translate the ORF on the tmRNA; the nascent peptide is terminated with the 'tag peptide' encoded by the tmRNA and targeted for degradation. The ribosome is freed to recommence translation, which seems to be the essential function of trans-translation.</text>
</comment>
<comment type="subcellular location">
    <subcellularLocation>
        <location evidence="1">Cytoplasm</location>
    </subcellularLocation>
    <text evidence="1">The tmRNA-SmpB complex associates with stalled 70S ribosomes.</text>
</comment>
<comment type="similarity">
    <text evidence="1">Belongs to the SmpB family.</text>
</comment>
<comment type="sequence caution" evidence="2">
    <conflict type="erroneous initiation">
        <sequence resource="EMBL-CDS" id="ABV84790"/>
    </conflict>
    <text>Extended N-terminus.</text>
</comment>
<sequence length="152" mass="17882">MTEYKKVIAQNKKALFNYFIEERLEAGIVLKGSEVQSLRQGKASIEESHATDTGHEVFLYNCHIAEYEKANRFNHATRRPRKLLLHTKEIKKIIGRIRIKGYTLVALSMYFNKKNKVKVELGIAKGKKLHDKRESIQEKDWKRDQSRLIRQK</sequence>
<keyword id="KW-0963">Cytoplasm</keyword>
<keyword id="KW-0694">RNA-binding</keyword>
<evidence type="ECO:0000255" key="1">
    <source>
        <dbReference type="HAMAP-Rule" id="MF_00023"/>
    </source>
</evidence>
<evidence type="ECO:0000305" key="2"/>
<proteinExistence type="inferred from homology"/>
<accession>A8F1K4</accession>
<protein>
    <recommendedName>
        <fullName evidence="1">SsrA-binding protein</fullName>
    </recommendedName>
    <alternativeName>
        <fullName evidence="1">Small protein B</fullName>
    </alternativeName>
</protein>
<dbReference type="EMBL" id="CP000683">
    <property type="protein sequence ID" value="ABV84790.1"/>
    <property type="status" value="ALT_INIT"/>
    <property type="molecule type" value="Genomic_DNA"/>
</dbReference>
<dbReference type="RefSeq" id="WP_014365853.1">
    <property type="nucleotide sequence ID" value="NC_009900.1"/>
</dbReference>
<dbReference type="SMR" id="A8F1K4"/>
<dbReference type="KEGG" id="rms:RMA_0611"/>
<dbReference type="HOGENOM" id="CLU_108953_0_1_5"/>
<dbReference type="Proteomes" id="UP000001311">
    <property type="component" value="Chromosome"/>
</dbReference>
<dbReference type="GO" id="GO:0005829">
    <property type="term" value="C:cytosol"/>
    <property type="evidence" value="ECO:0007669"/>
    <property type="project" value="TreeGrafter"/>
</dbReference>
<dbReference type="GO" id="GO:0003723">
    <property type="term" value="F:RNA binding"/>
    <property type="evidence" value="ECO:0007669"/>
    <property type="project" value="UniProtKB-UniRule"/>
</dbReference>
<dbReference type="GO" id="GO:0070929">
    <property type="term" value="P:trans-translation"/>
    <property type="evidence" value="ECO:0007669"/>
    <property type="project" value="UniProtKB-UniRule"/>
</dbReference>
<dbReference type="CDD" id="cd09294">
    <property type="entry name" value="SmpB"/>
    <property type="match status" value="1"/>
</dbReference>
<dbReference type="Gene3D" id="2.40.280.10">
    <property type="match status" value="1"/>
</dbReference>
<dbReference type="HAMAP" id="MF_00023">
    <property type="entry name" value="SmpB"/>
    <property type="match status" value="1"/>
</dbReference>
<dbReference type="InterPro" id="IPR023620">
    <property type="entry name" value="SmpB"/>
</dbReference>
<dbReference type="InterPro" id="IPR000037">
    <property type="entry name" value="SsrA-bd_prot"/>
</dbReference>
<dbReference type="InterPro" id="IPR020081">
    <property type="entry name" value="SsrA-bd_prot_CS"/>
</dbReference>
<dbReference type="NCBIfam" id="NF003843">
    <property type="entry name" value="PRK05422.1"/>
    <property type="match status" value="1"/>
</dbReference>
<dbReference type="NCBIfam" id="TIGR00086">
    <property type="entry name" value="smpB"/>
    <property type="match status" value="1"/>
</dbReference>
<dbReference type="PANTHER" id="PTHR30308:SF2">
    <property type="entry name" value="SSRA-BINDING PROTEIN"/>
    <property type="match status" value="1"/>
</dbReference>
<dbReference type="PANTHER" id="PTHR30308">
    <property type="entry name" value="TMRNA-BINDING COMPONENT OF TRANS-TRANSLATION TAGGING COMPLEX"/>
    <property type="match status" value="1"/>
</dbReference>
<dbReference type="Pfam" id="PF01668">
    <property type="entry name" value="SmpB"/>
    <property type="match status" value="1"/>
</dbReference>
<dbReference type="SUPFAM" id="SSF74982">
    <property type="entry name" value="Small protein B (SmpB)"/>
    <property type="match status" value="1"/>
</dbReference>
<dbReference type="PROSITE" id="PS01317">
    <property type="entry name" value="SSRP"/>
    <property type="match status" value="1"/>
</dbReference>
<reference key="1">
    <citation type="journal article" date="2007" name="Genome Res.">
        <title>Lateral gene transfer between obligate intracellular bacteria: evidence from the Rickettsia massiliae genome.</title>
        <authorList>
            <person name="Blanc G."/>
            <person name="Ogata H."/>
            <person name="Robert C."/>
            <person name="Audic S."/>
            <person name="Claverie J.-M."/>
            <person name="Raoult D."/>
        </authorList>
    </citation>
    <scope>NUCLEOTIDE SEQUENCE [LARGE SCALE GENOMIC DNA]</scope>
    <source>
        <strain>Mtu5</strain>
    </source>
</reference>
<feature type="chain" id="PRO_0000331089" description="SsrA-binding protein">
    <location>
        <begin position="1"/>
        <end position="152"/>
    </location>
</feature>